<keyword id="KW-0574">Periplasm</keyword>
<keyword id="KW-0614">Plasmid</keyword>
<keyword id="KW-1185">Reference proteome</keyword>
<keyword id="KW-0732">Signal</keyword>
<evidence type="ECO:0000250" key="1"/>
<evidence type="ECO:0000255" key="2"/>
<evidence type="ECO:0000305" key="3"/>
<gene>
    <name type="primary">opgD2</name>
    <name type="ordered locus">RSp0262</name>
    <name type="ORF">RS03704</name>
</gene>
<reference key="1">
    <citation type="journal article" date="2002" name="Nature">
        <title>Genome sequence of the plant pathogen Ralstonia solanacearum.</title>
        <authorList>
            <person name="Salanoubat M."/>
            <person name="Genin S."/>
            <person name="Artiguenave F."/>
            <person name="Gouzy J."/>
            <person name="Mangenot S."/>
            <person name="Arlat M."/>
            <person name="Billault A."/>
            <person name="Brottier P."/>
            <person name="Camus J.-C."/>
            <person name="Cattolico L."/>
            <person name="Chandler M."/>
            <person name="Choisne N."/>
            <person name="Claudel-Renard C."/>
            <person name="Cunnac S."/>
            <person name="Demange N."/>
            <person name="Gaspin C."/>
            <person name="Lavie M."/>
            <person name="Moisan A."/>
            <person name="Robert C."/>
            <person name="Saurin W."/>
            <person name="Schiex T."/>
            <person name="Siguier P."/>
            <person name="Thebault P."/>
            <person name="Whalen M."/>
            <person name="Wincker P."/>
            <person name="Levy M."/>
            <person name="Weissenbach J."/>
            <person name="Boucher C.A."/>
        </authorList>
    </citation>
    <scope>NUCLEOTIDE SEQUENCE [LARGE SCALE GENOMIC DNA]</scope>
    <source>
        <strain>ATCC BAA-1114 / GMI1000</strain>
    </source>
</reference>
<feature type="signal peptide" description="Tat-type signal" evidence="2">
    <location>
        <begin position="1"/>
        <end position="28"/>
    </location>
</feature>
<feature type="chain" id="PRO_0000020211" description="Glucans biosynthesis protein D 2">
    <location>
        <begin position="29"/>
        <end position="537"/>
    </location>
</feature>
<comment type="function">
    <text evidence="1">Probably involved in the control of the structural glucose backbone of osmoregulated periplasmic glucans (OPGs).</text>
</comment>
<comment type="pathway">
    <text>Glycan metabolism; osmoregulated periplasmic glucan (OPG) biosynthesis.</text>
</comment>
<comment type="subcellular location">
    <subcellularLocation>
        <location evidence="1">Periplasm</location>
    </subcellularLocation>
</comment>
<comment type="PTM">
    <text>Predicted to be exported by the Tat system. The position of the signal peptide cleavage has not been experimentally proven.</text>
</comment>
<comment type="similarity">
    <text evidence="3">Belongs to the OpgD/OpgG family.</text>
</comment>
<comment type="sequence caution" evidence="3">
    <conflict type="erroneous initiation">
        <sequence resource="EMBL-CDS" id="CAD17413"/>
    </conflict>
</comment>
<geneLocation type="plasmid">
    <name>megaplasmid Rsp</name>
</geneLocation>
<proteinExistence type="inferred from homology"/>
<name>OPGD2_RALN1</name>
<sequence>MVTRRHLLASASLSATLAALGITPEALAASRVKLGNAAPFNFDALIERARAMAGQPYTPPATAPADILAKIDYEAHGKIKFDTAHALFADGPGQFPVTFFHLGTFFRAPVRMHVVDKGEAREIVYDESYFDMPADSPARKLPRNSGFAGFRFQESRLGDQKKLDWKKNDWVAFLGASYFRAIGELYQYGLSARGIALDVAQAGRAEEFPNFTHVWFDTPSNEHADSVTIYALLDGPGITGAYRFVMHRGKGVVMEIDTALFLRRDIDRFGIAPASSMYWFSETAKGTATDWRPEVHDSDGLAMWTGSGERIWRPLNDPPRVMTSAFSDNNPRGFGLLQRDRDFNNYMDGVHYERRPSLWVEPLEGWGEGAVQLVEIPTDDEIHDNIVAMWVPKAPARAGSHYRLRYRLHWLADEPYPTPLARCVATRLGNGGQPGQPRPRGVRKFMVEFKGGPLEKVPFGVKPEAVLTSSRGTFSYVFTEAVPNGVPGHWRAQFDLTVDGKEPVDMRLFLRLDGKPLSETWLYQYHPFQSPVGPVAS</sequence>
<organism>
    <name type="scientific">Ralstonia nicotianae (strain ATCC BAA-1114 / GMI1000)</name>
    <name type="common">Ralstonia solanacearum</name>
    <dbReference type="NCBI Taxonomy" id="267608"/>
    <lineage>
        <taxon>Bacteria</taxon>
        <taxon>Pseudomonadati</taxon>
        <taxon>Pseudomonadota</taxon>
        <taxon>Betaproteobacteria</taxon>
        <taxon>Burkholderiales</taxon>
        <taxon>Burkholderiaceae</taxon>
        <taxon>Ralstonia</taxon>
        <taxon>Ralstonia solanacearum species complex</taxon>
    </lineage>
</organism>
<protein>
    <recommendedName>
        <fullName>Glucans biosynthesis protein D 2</fullName>
    </recommendedName>
</protein>
<accession>Q8XT53</accession>
<dbReference type="EMBL" id="AL646053">
    <property type="protein sequence ID" value="CAD17413.1"/>
    <property type="status" value="ALT_INIT"/>
    <property type="molecule type" value="Genomic_DNA"/>
</dbReference>
<dbReference type="RefSeq" id="WP_028854026.1">
    <property type="nucleotide sequence ID" value="NC_003296.1"/>
</dbReference>
<dbReference type="SMR" id="Q8XT53"/>
<dbReference type="STRING" id="267608.RSp0262"/>
<dbReference type="EnsemblBacteria" id="CAD17413">
    <property type="protein sequence ID" value="CAD17413"/>
    <property type="gene ID" value="RSp0262"/>
</dbReference>
<dbReference type="KEGG" id="rso:RSp0262"/>
<dbReference type="eggNOG" id="COG3131">
    <property type="taxonomic scope" value="Bacteria"/>
</dbReference>
<dbReference type="HOGENOM" id="CLU_023403_2_0_4"/>
<dbReference type="UniPathway" id="UPA00637"/>
<dbReference type="Proteomes" id="UP000001436">
    <property type="component" value="Plasmid megaplasmid Rsp"/>
</dbReference>
<dbReference type="GO" id="GO:0030288">
    <property type="term" value="C:outer membrane-bounded periplasmic space"/>
    <property type="evidence" value="ECO:0007669"/>
    <property type="project" value="TreeGrafter"/>
</dbReference>
<dbReference type="GO" id="GO:0030246">
    <property type="term" value="F:carbohydrate binding"/>
    <property type="evidence" value="ECO:0007669"/>
    <property type="project" value="InterPro"/>
</dbReference>
<dbReference type="GO" id="GO:0003824">
    <property type="term" value="F:catalytic activity"/>
    <property type="evidence" value="ECO:0007669"/>
    <property type="project" value="InterPro"/>
</dbReference>
<dbReference type="GO" id="GO:0051274">
    <property type="term" value="P:beta-glucan biosynthetic process"/>
    <property type="evidence" value="ECO:0007669"/>
    <property type="project" value="TreeGrafter"/>
</dbReference>
<dbReference type="FunFam" id="2.70.98.10:FF:000001">
    <property type="entry name" value="Glucans biosynthesis protein G"/>
    <property type="match status" value="1"/>
</dbReference>
<dbReference type="Gene3D" id="2.70.98.10">
    <property type="match status" value="1"/>
</dbReference>
<dbReference type="Gene3D" id="2.60.40.10">
    <property type="entry name" value="Immunoglobulins"/>
    <property type="match status" value="1"/>
</dbReference>
<dbReference type="HAMAP" id="MF_01068">
    <property type="entry name" value="MdoD_OpgD"/>
    <property type="match status" value="1"/>
</dbReference>
<dbReference type="InterPro" id="IPR011013">
    <property type="entry name" value="Gal_mutarotase_sf_dom"/>
</dbReference>
<dbReference type="InterPro" id="IPR014718">
    <property type="entry name" value="GH-type_carb-bd"/>
</dbReference>
<dbReference type="InterPro" id="IPR023724">
    <property type="entry name" value="Glucan_biosyn_MdoD"/>
</dbReference>
<dbReference type="InterPro" id="IPR014438">
    <property type="entry name" value="Glucan_biosyn_MdoG/MdoD"/>
</dbReference>
<dbReference type="InterPro" id="IPR007444">
    <property type="entry name" value="Glucan_biosyn_MdoG_C"/>
</dbReference>
<dbReference type="InterPro" id="IPR013783">
    <property type="entry name" value="Ig-like_fold"/>
</dbReference>
<dbReference type="InterPro" id="IPR014756">
    <property type="entry name" value="Ig_E-set"/>
</dbReference>
<dbReference type="InterPro" id="IPR006311">
    <property type="entry name" value="TAT_signal"/>
</dbReference>
<dbReference type="PANTHER" id="PTHR30504">
    <property type="entry name" value="GLUCANS BIOSYNTHESIS PROTEIN"/>
    <property type="match status" value="1"/>
</dbReference>
<dbReference type="PANTHER" id="PTHR30504:SF3">
    <property type="entry name" value="GLUCANS BIOSYNTHESIS PROTEIN D"/>
    <property type="match status" value="1"/>
</dbReference>
<dbReference type="Pfam" id="PF04349">
    <property type="entry name" value="MdoG"/>
    <property type="match status" value="1"/>
</dbReference>
<dbReference type="PIRSF" id="PIRSF006281">
    <property type="entry name" value="MdoG"/>
    <property type="match status" value="1"/>
</dbReference>
<dbReference type="SUPFAM" id="SSF81296">
    <property type="entry name" value="E set domains"/>
    <property type="match status" value="1"/>
</dbReference>
<dbReference type="SUPFAM" id="SSF74650">
    <property type="entry name" value="Galactose mutarotase-like"/>
    <property type="match status" value="1"/>
</dbReference>
<dbReference type="PROSITE" id="PS51318">
    <property type="entry name" value="TAT"/>
    <property type="match status" value="1"/>
</dbReference>